<comment type="function">
    <text evidence="1">Catalyzes the formation of 5-methyl-uridine at position 1939 (m5U1939) in 23S rRNA.</text>
</comment>
<comment type="catalytic activity">
    <reaction evidence="1">
        <text>uridine(1939) in 23S rRNA + S-adenosyl-L-methionine = 5-methyluridine(1939) in 23S rRNA + S-adenosyl-L-homocysteine + H(+)</text>
        <dbReference type="Rhea" id="RHEA:42908"/>
        <dbReference type="Rhea" id="RHEA-COMP:10278"/>
        <dbReference type="Rhea" id="RHEA-COMP:10279"/>
        <dbReference type="ChEBI" id="CHEBI:15378"/>
        <dbReference type="ChEBI" id="CHEBI:57856"/>
        <dbReference type="ChEBI" id="CHEBI:59789"/>
        <dbReference type="ChEBI" id="CHEBI:65315"/>
        <dbReference type="ChEBI" id="CHEBI:74447"/>
        <dbReference type="EC" id="2.1.1.190"/>
    </reaction>
</comment>
<comment type="similarity">
    <text evidence="1">Belongs to the class I-like SAM-binding methyltransferase superfamily. RNA M5U methyltransferase family. RlmD subfamily.</text>
</comment>
<name>RLMD_CUPNH</name>
<evidence type="ECO:0000255" key="1">
    <source>
        <dbReference type="HAMAP-Rule" id="MF_01010"/>
    </source>
</evidence>
<organism>
    <name type="scientific">Cupriavidus necator (strain ATCC 17699 / DSM 428 / KCTC 22496 / NCIMB 10442 / H16 / Stanier 337)</name>
    <name type="common">Ralstonia eutropha</name>
    <dbReference type="NCBI Taxonomy" id="381666"/>
    <lineage>
        <taxon>Bacteria</taxon>
        <taxon>Pseudomonadati</taxon>
        <taxon>Pseudomonadota</taxon>
        <taxon>Betaproteobacteria</taxon>
        <taxon>Burkholderiales</taxon>
        <taxon>Burkholderiaceae</taxon>
        <taxon>Cupriavidus</taxon>
    </lineage>
</organism>
<sequence>MSIDSLDMEARGVGRLLNEDGTPGKVIFVEGALPGETVSYRSFRRKPSYEQAHLVEVRQESVMRVKPGCQHFGVCGGCSMQHLDSRAQLAIKQRVLEDNLWHLSKVKPDVVFRPIAGPDWGYRYRARLTVRHVAKKGGVLVGFHERKSSYVADMTRCEILPPHVSAMLVPLRELVGGLSIRDRMPQIELAVGQEVTALVLRILEPLTDADKDLLRAFADQHKVQFWLQPKGPDTVYPFYPADAELAYTLPEFGIRMPFKPTDFTQVNHQINRVLIGRALRLLDAQPQDRLLDLFCGIGNFTLPLATQGKSVMGIEGSEALTTRALANAEYNGLAARTEFACRNLFEVTAEDIAALGRFDRWLVDPPREGALAVCKALGELAQQGSNVLPQRIVYVSCSPATLARDAGLLVHGAGYRLAGAGVVNMFPHTSHVESIAVFERG</sequence>
<gene>
    <name evidence="1" type="primary">rlmD</name>
    <name type="synonym">rumA</name>
    <name type="ordered locus">H16_A2370</name>
</gene>
<accession>Q0K956</accession>
<feature type="chain" id="PRO_0000282057" description="23S rRNA (uracil(1939)-C(5))-methyltransferase RlmD">
    <location>
        <begin position="1"/>
        <end position="441"/>
    </location>
</feature>
<feature type="domain" description="TRAM" evidence="1">
    <location>
        <begin position="1"/>
        <end position="56"/>
    </location>
</feature>
<feature type="active site" description="Nucleophile" evidence="1">
    <location>
        <position position="397"/>
    </location>
</feature>
<feature type="binding site" evidence="1">
    <location>
        <position position="69"/>
    </location>
    <ligand>
        <name>[4Fe-4S] cluster</name>
        <dbReference type="ChEBI" id="CHEBI:49883"/>
    </ligand>
</feature>
<feature type="binding site" evidence="1">
    <location>
        <position position="75"/>
    </location>
    <ligand>
        <name>[4Fe-4S] cluster</name>
        <dbReference type="ChEBI" id="CHEBI:49883"/>
    </ligand>
</feature>
<feature type="binding site" evidence="1">
    <location>
        <position position="78"/>
    </location>
    <ligand>
        <name>[4Fe-4S] cluster</name>
        <dbReference type="ChEBI" id="CHEBI:49883"/>
    </ligand>
</feature>
<feature type="binding site" evidence="1">
    <location>
        <position position="157"/>
    </location>
    <ligand>
        <name>[4Fe-4S] cluster</name>
        <dbReference type="ChEBI" id="CHEBI:49883"/>
    </ligand>
</feature>
<feature type="binding site" evidence="1">
    <location>
        <position position="265"/>
    </location>
    <ligand>
        <name>S-adenosyl-L-methionine</name>
        <dbReference type="ChEBI" id="CHEBI:59789"/>
    </ligand>
</feature>
<feature type="binding site" evidence="1">
    <location>
        <position position="294"/>
    </location>
    <ligand>
        <name>S-adenosyl-L-methionine</name>
        <dbReference type="ChEBI" id="CHEBI:59789"/>
    </ligand>
</feature>
<feature type="binding site" evidence="1">
    <location>
        <position position="299"/>
    </location>
    <ligand>
        <name>S-adenosyl-L-methionine</name>
        <dbReference type="ChEBI" id="CHEBI:59789"/>
    </ligand>
</feature>
<feature type="binding site" evidence="1">
    <location>
        <position position="315"/>
    </location>
    <ligand>
        <name>S-adenosyl-L-methionine</name>
        <dbReference type="ChEBI" id="CHEBI:59789"/>
    </ligand>
</feature>
<feature type="binding site" evidence="1">
    <location>
        <position position="343"/>
    </location>
    <ligand>
        <name>S-adenosyl-L-methionine</name>
        <dbReference type="ChEBI" id="CHEBI:59789"/>
    </ligand>
</feature>
<feature type="binding site" evidence="1">
    <location>
        <position position="364"/>
    </location>
    <ligand>
        <name>S-adenosyl-L-methionine</name>
        <dbReference type="ChEBI" id="CHEBI:59789"/>
    </ligand>
</feature>
<proteinExistence type="inferred from homology"/>
<reference key="1">
    <citation type="journal article" date="2006" name="Nat. Biotechnol.">
        <title>Genome sequence of the bioplastic-producing 'Knallgas' bacterium Ralstonia eutropha H16.</title>
        <authorList>
            <person name="Pohlmann A."/>
            <person name="Fricke W.F."/>
            <person name="Reinecke F."/>
            <person name="Kusian B."/>
            <person name="Liesegang H."/>
            <person name="Cramm R."/>
            <person name="Eitinger T."/>
            <person name="Ewering C."/>
            <person name="Poetter M."/>
            <person name="Schwartz E."/>
            <person name="Strittmatter A."/>
            <person name="Voss I."/>
            <person name="Gottschalk G."/>
            <person name="Steinbuechel A."/>
            <person name="Friedrich B."/>
            <person name="Bowien B."/>
        </authorList>
    </citation>
    <scope>NUCLEOTIDE SEQUENCE [LARGE SCALE GENOMIC DNA]</scope>
    <source>
        <strain>ATCC 17699 / DSM 428 / KCTC 22496 / NCIMB 10442 / H16 / Stanier 337</strain>
    </source>
</reference>
<protein>
    <recommendedName>
        <fullName evidence="1">23S rRNA (uracil(1939)-C(5))-methyltransferase RlmD</fullName>
        <ecNumber evidence="1">2.1.1.190</ecNumber>
    </recommendedName>
    <alternativeName>
        <fullName evidence="1">23S rRNA(m5U1939)-methyltransferase</fullName>
    </alternativeName>
</protein>
<dbReference type="EC" id="2.1.1.190" evidence="1"/>
<dbReference type="EMBL" id="AM260479">
    <property type="protein sequence ID" value="CAJ93465.1"/>
    <property type="molecule type" value="Genomic_DNA"/>
</dbReference>
<dbReference type="SMR" id="Q0K956"/>
<dbReference type="STRING" id="381666.H16_A2370"/>
<dbReference type="KEGG" id="reh:H16_A2370"/>
<dbReference type="eggNOG" id="COG2265">
    <property type="taxonomic scope" value="Bacteria"/>
</dbReference>
<dbReference type="HOGENOM" id="CLU_014689_8_2_4"/>
<dbReference type="Proteomes" id="UP000008210">
    <property type="component" value="Chromosome 1"/>
</dbReference>
<dbReference type="GO" id="GO:0051539">
    <property type="term" value="F:4 iron, 4 sulfur cluster binding"/>
    <property type="evidence" value="ECO:0007669"/>
    <property type="project" value="UniProtKB-KW"/>
</dbReference>
<dbReference type="GO" id="GO:0005506">
    <property type="term" value="F:iron ion binding"/>
    <property type="evidence" value="ECO:0007669"/>
    <property type="project" value="UniProtKB-UniRule"/>
</dbReference>
<dbReference type="GO" id="GO:0003723">
    <property type="term" value="F:RNA binding"/>
    <property type="evidence" value="ECO:0007669"/>
    <property type="project" value="InterPro"/>
</dbReference>
<dbReference type="GO" id="GO:0070041">
    <property type="term" value="F:rRNA (uridine-C5-)-methyltransferase activity"/>
    <property type="evidence" value="ECO:0007669"/>
    <property type="project" value="UniProtKB-UniRule"/>
</dbReference>
<dbReference type="GO" id="GO:0070475">
    <property type="term" value="P:rRNA base methylation"/>
    <property type="evidence" value="ECO:0007669"/>
    <property type="project" value="TreeGrafter"/>
</dbReference>
<dbReference type="CDD" id="cd02440">
    <property type="entry name" value="AdoMet_MTases"/>
    <property type="match status" value="1"/>
</dbReference>
<dbReference type="Gene3D" id="2.40.50.1070">
    <property type="match status" value="1"/>
</dbReference>
<dbReference type="Gene3D" id="2.40.50.140">
    <property type="entry name" value="Nucleic acid-binding proteins"/>
    <property type="match status" value="1"/>
</dbReference>
<dbReference type="Gene3D" id="3.40.50.150">
    <property type="entry name" value="Vaccinia Virus protein VP39"/>
    <property type="match status" value="1"/>
</dbReference>
<dbReference type="HAMAP" id="MF_01010">
    <property type="entry name" value="23SrRNA_methyltr_RlmD"/>
    <property type="match status" value="1"/>
</dbReference>
<dbReference type="InterPro" id="IPR001566">
    <property type="entry name" value="23S_rRNA_MeTrfase_RlmD"/>
</dbReference>
<dbReference type="InterPro" id="IPR030391">
    <property type="entry name" value="MeTrfase_TrmA_CS"/>
</dbReference>
<dbReference type="InterPro" id="IPR012340">
    <property type="entry name" value="NA-bd_OB-fold"/>
</dbReference>
<dbReference type="InterPro" id="IPR029063">
    <property type="entry name" value="SAM-dependent_MTases_sf"/>
</dbReference>
<dbReference type="InterPro" id="IPR002792">
    <property type="entry name" value="TRAM_dom"/>
</dbReference>
<dbReference type="InterPro" id="IPR010280">
    <property type="entry name" value="U5_MeTrfase_fam"/>
</dbReference>
<dbReference type="NCBIfam" id="NF009639">
    <property type="entry name" value="PRK13168.1"/>
    <property type="match status" value="1"/>
</dbReference>
<dbReference type="PANTHER" id="PTHR11061:SF49">
    <property type="entry name" value="23S RRNA (URACIL(1939)-C(5))-METHYLTRANSFERASE RLMD"/>
    <property type="match status" value="1"/>
</dbReference>
<dbReference type="PANTHER" id="PTHR11061">
    <property type="entry name" value="RNA M5U METHYLTRANSFERASE"/>
    <property type="match status" value="1"/>
</dbReference>
<dbReference type="Pfam" id="PF05958">
    <property type="entry name" value="tRNA_U5-meth_tr"/>
    <property type="match status" value="1"/>
</dbReference>
<dbReference type="SUPFAM" id="SSF50249">
    <property type="entry name" value="Nucleic acid-binding proteins"/>
    <property type="match status" value="1"/>
</dbReference>
<dbReference type="SUPFAM" id="SSF53335">
    <property type="entry name" value="S-adenosyl-L-methionine-dependent methyltransferases"/>
    <property type="match status" value="1"/>
</dbReference>
<dbReference type="PROSITE" id="PS51687">
    <property type="entry name" value="SAM_MT_RNA_M5U"/>
    <property type="match status" value="1"/>
</dbReference>
<dbReference type="PROSITE" id="PS50926">
    <property type="entry name" value="TRAM"/>
    <property type="match status" value="1"/>
</dbReference>
<dbReference type="PROSITE" id="PS01231">
    <property type="entry name" value="TRMA_2"/>
    <property type="match status" value="1"/>
</dbReference>
<keyword id="KW-0004">4Fe-4S</keyword>
<keyword id="KW-0408">Iron</keyword>
<keyword id="KW-0411">Iron-sulfur</keyword>
<keyword id="KW-0479">Metal-binding</keyword>
<keyword id="KW-0489">Methyltransferase</keyword>
<keyword id="KW-1185">Reference proteome</keyword>
<keyword id="KW-0698">rRNA processing</keyword>
<keyword id="KW-0949">S-adenosyl-L-methionine</keyword>
<keyword id="KW-0808">Transferase</keyword>